<proteinExistence type="inferred from homology"/>
<gene>
    <name evidence="2" type="primary">arfB</name>
    <name type="ordered locus">MTH_651</name>
</gene>
<feature type="chain" id="PRO_0000406917" description="2-amino-5-formylamino-6-ribosylaminopyrimidin-4(3H)-one 5'-monophosphate deformylase">
    <location>
        <begin position="1"/>
        <end position="234"/>
    </location>
</feature>
<feature type="binding site" evidence="2">
    <location>
        <position position="30"/>
    </location>
    <ligand>
        <name>Fe cation</name>
        <dbReference type="ChEBI" id="CHEBI:24875"/>
        <label>1</label>
    </ligand>
</feature>
<feature type="binding site" evidence="2">
    <location>
        <position position="32"/>
    </location>
    <ligand>
        <name>Fe cation</name>
        <dbReference type="ChEBI" id="CHEBI:24875"/>
        <label>2</label>
    </ligand>
</feature>
<feature type="binding site" evidence="2">
    <location>
        <position position="41"/>
    </location>
    <ligand>
        <name>Fe cation</name>
        <dbReference type="ChEBI" id="CHEBI:24875"/>
        <label>1</label>
    </ligand>
</feature>
<feature type="binding site" evidence="2">
    <location>
        <position position="41"/>
    </location>
    <ligand>
        <name>Fe cation</name>
        <dbReference type="ChEBI" id="CHEBI:24875"/>
        <label>2</label>
    </ligand>
</feature>
<feature type="binding site" evidence="2">
    <location>
        <position position="111"/>
    </location>
    <ligand>
        <name>Fe cation</name>
        <dbReference type="ChEBI" id="CHEBI:24875"/>
        <label>1</label>
    </ligand>
</feature>
<comment type="function">
    <text evidence="2">Catalyzes the hydrolysis of the formamide of 2-amino-5-formylamino-6-ribosylamino-4(3H)-pyrimidinone 5'-monophosphate (FAPy) to form 2,5-diamino-6-ribosylamino-4(3H)-pyrimidinone 5'-phosphate (APy).</text>
</comment>
<comment type="catalytic activity">
    <reaction evidence="2">
        <text>2-amino-5-formylamino-6-(5-phospho-D-ribosylamino)pyrimidin-4(3H)-one + H2O = 2,5-diamino-6-(1-D-ribosylamino)pyrimidin-4(3H)-one 5'-phosphate + formate + H(+)</text>
        <dbReference type="Rhea" id="RHEA:27282"/>
        <dbReference type="ChEBI" id="CHEBI:15377"/>
        <dbReference type="ChEBI" id="CHEBI:15378"/>
        <dbReference type="ChEBI" id="CHEBI:15740"/>
        <dbReference type="ChEBI" id="CHEBI:57258"/>
        <dbReference type="ChEBI" id="CHEBI:59545"/>
        <dbReference type="EC" id="3.5.1.102"/>
    </reaction>
</comment>
<comment type="cofactor">
    <cofactor evidence="1">
        <name>Fe(2+)</name>
        <dbReference type="ChEBI" id="CHEBI:29033"/>
    </cofactor>
    <text evidence="1">Requires one Fe(2+) ion for activity.</text>
</comment>
<comment type="cofactor">
    <cofactor evidence="1">
        <name>Fe(2+)</name>
        <dbReference type="ChEBI" id="CHEBI:29033"/>
    </cofactor>
    <cofactor evidence="1">
        <name>Zn(2+)</name>
        <dbReference type="ChEBI" id="CHEBI:29105"/>
    </cofactor>
    <text evidence="1">Requires an additional second metal ion that could be Fe(2+) or Zn(2+).</text>
</comment>
<comment type="pathway">
    <text evidence="2">Cofactor biosynthesis; coenzyme F420 biosynthesis.</text>
</comment>
<comment type="pathway">
    <text evidence="2">Cofactor biosynthesis; riboflavin biosynthesis.</text>
</comment>
<comment type="subunit">
    <text evidence="2">Homodimer.</text>
</comment>
<comment type="similarity">
    <text evidence="2">Belongs to the creatininase superfamily. FAPy deformylase family.</text>
</comment>
<sequence>MLVELNLDAGNIISEDVHRIGILAVGSHLENHGPALPIDTDAKIASYVALEAALRTGARFLGVLYAASEFPYVKHGIHMDRDELVERELKPVLRKARRLLNLEAAVIVNGHGGNKLEDCMDDLEEELGLEIAWNNRIVEIEGPHAGSGELSAGLILGIADLRRLDECIPELYPEIGMIGLKEAREANREIDKAARICERDGVNPDPVLGQRILDDAVESVISDVKELLKIIQEF</sequence>
<accession>O26747</accession>
<reference key="1">
    <citation type="journal article" date="1997" name="J. Bacteriol.">
        <title>Complete genome sequence of Methanobacterium thermoautotrophicum deltaH: functional analysis and comparative genomics.</title>
        <authorList>
            <person name="Smith D.R."/>
            <person name="Doucette-Stamm L.A."/>
            <person name="Deloughery C."/>
            <person name="Lee H.-M."/>
            <person name="Dubois J."/>
            <person name="Aldredge T."/>
            <person name="Bashirzadeh R."/>
            <person name="Blakely D."/>
            <person name="Cook R."/>
            <person name="Gilbert K."/>
            <person name="Harrison D."/>
            <person name="Hoang L."/>
            <person name="Keagle P."/>
            <person name="Lumm W."/>
            <person name="Pothier B."/>
            <person name="Qiu D."/>
            <person name="Spadafora R."/>
            <person name="Vicare R."/>
            <person name="Wang Y."/>
            <person name="Wierzbowski J."/>
            <person name="Gibson R."/>
            <person name="Jiwani N."/>
            <person name="Caruso A."/>
            <person name="Bush D."/>
            <person name="Safer H."/>
            <person name="Patwell D."/>
            <person name="Prabhakar S."/>
            <person name="McDougall S."/>
            <person name="Shimer G."/>
            <person name="Goyal A."/>
            <person name="Pietrovski S."/>
            <person name="Church G.M."/>
            <person name="Daniels C.J."/>
            <person name="Mao J.-I."/>
            <person name="Rice P."/>
            <person name="Noelling J."/>
            <person name="Reeve J.N."/>
        </authorList>
    </citation>
    <scope>NUCLEOTIDE SEQUENCE [LARGE SCALE GENOMIC DNA]</scope>
    <source>
        <strain>ATCC 29096 / DSM 1053 / JCM 10044 / NBRC 100330 / Delta H</strain>
    </source>
</reference>
<protein>
    <recommendedName>
        <fullName evidence="2">2-amino-5-formylamino-6-ribosylaminopyrimidin-4(3H)-one 5'-monophosphate deformylase</fullName>
        <shortName evidence="2">FAPy deformylase</shortName>
        <ecNumber evidence="2">3.5.1.102</ecNumber>
    </recommendedName>
    <alternativeName>
        <fullName evidence="2">Formamide hydrolase</fullName>
    </alternativeName>
</protein>
<name>ARFB_METTH</name>
<dbReference type="EC" id="3.5.1.102" evidence="2"/>
<dbReference type="EMBL" id="AE000666">
    <property type="protein sequence ID" value="AAB85156.1"/>
    <property type="molecule type" value="Genomic_DNA"/>
</dbReference>
<dbReference type="PIR" id="F69186">
    <property type="entry name" value="F69186"/>
</dbReference>
<dbReference type="SMR" id="O26747"/>
<dbReference type="FunCoup" id="O26747">
    <property type="interactions" value="8"/>
</dbReference>
<dbReference type="STRING" id="187420.MTH_651"/>
<dbReference type="PaxDb" id="187420-MTH_651"/>
<dbReference type="EnsemblBacteria" id="AAB85156">
    <property type="protein sequence ID" value="AAB85156"/>
    <property type="gene ID" value="MTH_651"/>
</dbReference>
<dbReference type="KEGG" id="mth:MTH_651"/>
<dbReference type="PATRIC" id="fig|187420.15.peg.630"/>
<dbReference type="HOGENOM" id="CLU_1192640_0_0_2"/>
<dbReference type="InParanoid" id="O26747"/>
<dbReference type="UniPathway" id="UPA00071"/>
<dbReference type="UniPathway" id="UPA00275"/>
<dbReference type="Proteomes" id="UP000005223">
    <property type="component" value="Chromosome"/>
</dbReference>
<dbReference type="GO" id="GO:0043729">
    <property type="term" value="F:2-amino-5-formylamino-6-(5-phosphoribosylamino)pyrimidin-4(3H)-one formate-lyase activity"/>
    <property type="evidence" value="ECO:0007669"/>
    <property type="project" value="UniProtKB-EC"/>
</dbReference>
<dbReference type="GO" id="GO:0008198">
    <property type="term" value="F:ferrous iron binding"/>
    <property type="evidence" value="ECO:0007669"/>
    <property type="project" value="UniProtKB-UniRule"/>
</dbReference>
<dbReference type="GO" id="GO:0052645">
    <property type="term" value="P:F420-0 metabolic process"/>
    <property type="evidence" value="ECO:0007669"/>
    <property type="project" value="UniProtKB-UniRule"/>
</dbReference>
<dbReference type="GO" id="GO:0009231">
    <property type="term" value="P:riboflavin biosynthetic process"/>
    <property type="evidence" value="ECO:0007669"/>
    <property type="project" value="UniProtKB-UniRule"/>
</dbReference>
<dbReference type="Gene3D" id="3.40.50.10310">
    <property type="entry name" value="Creatininase"/>
    <property type="match status" value="1"/>
</dbReference>
<dbReference type="HAMAP" id="MF_02116">
    <property type="entry name" value="FAPy_deform"/>
    <property type="match status" value="1"/>
</dbReference>
<dbReference type="InterPro" id="IPR024087">
    <property type="entry name" value="Creatininase-like_sf"/>
</dbReference>
<dbReference type="InterPro" id="IPR003785">
    <property type="entry name" value="Creatininase/forma_Hydrolase"/>
</dbReference>
<dbReference type="InterPro" id="IPR024901">
    <property type="entry name" value="FAPy_deformylase"/>
</dbReference>
<dbReference type="NCBIfam" id="NF033501">
    <property type="entry name" value="ArfB_arch_rifla"/>
    <property type="match status" value="1"/>
</dbReference>
<dbReference type="PANTHER" id="PTHR35005:SF1">
    <property type="entry name" value="2-AMINO-5-FORMYLAMINO-6-RIBOSYLAMINOPYRIMIDIN-4(3H)-ONE 5'-MONOPHOSPHATE DEFORMYLASE"/>
    <property type="match status" value="1"/>
</dbReference>
<dbReference type="PANTHER" id="PTHR35005">
    <property type="entry name" value="3-DEHYDRO-SCYLLO-INOSOSE HYDROLASE"/>
    <property type="match status" value="1"/>
</dbReference>
<dbReference type="Pfam" id="PF02633">
    <property type="entry name" value="Creatininase"/>
    <property type="match status" value="1"/>
</dbReference>
<dbReference type="SUPFAM" id="SSF102215">
    <property type="entry name" value="Creatininase"/>
    <property type="match status" value="1"/>
</dbReference>
<keyword id="KW-0378">Hydrolase</keyword>
<keyword id="KW-0408">Iron</keyword>
<keyword id="KW-0479">Metal-binding</keyword>
<keyword id="KW-1185">Reference proteome</keyword>
<keyword id="KW-0862">Zinc</keyword>
<evidence type="ECO:0000250" key="1"/>
<evidence type="ECO:0000255" key="2">
    <source>
        <dbReference type="HAMAP-Rule" id="MF_02116"/>
    </source>
</evidence>
<organism>
    <name type="scientific">Methanothermobacter thermautotrophicus (strain ATCC 29096 / DSM 1053 / JCM 10044 / NBRC 100330 / Delta H)</name>
    <name type="common">Methanobacterium thermoautotrophicum</name>
    <dbReference type="NCBI Taxonomy" id="187420"/>
    <lineage>
        <taxon>Archaea</taxon>
        <taxon>Methanobacteriati</taxon>
        <taxon>Methanobacteriota</taxon>
        <taxon>Methanomada group</taxon>
        <taxon>Methanobacteria</taxon>
        <taxon>Methanobacteriales</taxon>
        <taxon>Methanobacteriaceae</taxon>
        <taxon>Methanothermobacter</taxon>
    </lineage>
</organism>